<gene>
    <name evidence="1" type="primary">floA</name>
    <name type="ordered locus">FMG_0772</name>
</gene>
<sequence>MPFEIPFLVPILIVILLLVFFSLVPVGLWVTAQFSGVHVKISQLIGMRLRRVIPKNIINPLIKATKAGLNLTTNQLEAHYLAGGNVNTLVNALIAAQRADIELEFERAAAIDLAGRNVLEAVQVSVNPKVIETPNIAAVAMNGIEVIVKAKVTVRANIERLIGGAGEETIIARVGEGIVTTVGSSESHTSVLENPDSISKTVLNKGLDSGTAFEILSIDIADVDVGRNIGAKLQTDQAEADKRIAQAKAEERRAMAVAKEQEMIAEVRSMRAKVVESESKVPLAIAKALESGNLGVLDYYNMKNIISDTEMRQAISGNSEKIKEDDK</sequence>
<evidence type="ECO:0000255" key="1">
    <source>
        <dbReference type="HAMAP-Rule" id="MF_01562"/>
    </source>
</evidence>
<organism>
    <name type="scientific">Finegoldia magna (strain ATCC 29328 / DSM 20472 / WAL 2508)</name>
    <name type="common">Peptostreptococcus magnus</name>
    <dbReference type="NCBI Taxonomy" id="334413"/>
    <lineage>
        <taxon>Bacteria</taxon>
        <taxon>Bacillati</taxon>
        <taxon>Bacillota</taxon>
        <taxon>Tissierellia</taxon>
        <taxon>Tissierellales</taxon>
        <taxon>Peptoniphilaceae</taxon>
        <taxon>Finegoldia</taxon>
    </lineage>
</organism>
<name>FLOA_FINM2</name>
<comment type="function">
    <text evidence="1">Found in functional membrane microdomains (FMM) that may be equivalent to eukaryotic membrane rafts. FMMs are highly dynamic and increase in number as cells age. Flotillins are thought to be important factors in membrane fluidity.</text>
</comment>
<comment type="subunit">
    <text evidence="1">Homooligomerizes.</text>
</comment>
<comment type="subcellular location">
    <subcellularLocation>
        <location evidence="1">Cell membrane</location>
        <topology evidence="1">Single-pass membrane protein</topology>
    </subcellularLocation>
    <subcellularLocation>
        <location evidence="1">Membrane raft</location>
        <topology evidence="1">Single-pass membrane protein</topology>
    </subcellularLocation>
</comment>
<comment type="similarity">
    <text evidence="1">Belongs to the flotillin-like FloA family.</text>
</comment>
<feature type="chain" id="PRO_1000199715" description="Flotillin-like protein FloA">
    <location>
        <begin position="1"/>
        <end position="327"/>
    </location>
</feature>
<feature type="transmembrane region" description="Helical" evidence="1">
    <location>
        <begin position="7"/>
        <end position="27"/>
    </location>
</feature>
<keyword id="KW-1003">Cell membrane</keyword>
<keyword id="KW-0472">Membrane</keyword>
<keyword id="KW-1185">Reference proteome</keyword>
<keyword id="KW-0812">Transmembrane</keyword>
<keyword id="KW-1133">Transmembrane helix</keyword>
<reference key="1">
    <citation type="journal article" date="2008" name="DNA Res.">
        <title>Complete genome sequence of Finegoldia magna, an anaerobic opportunistic pathogen.</title>
        <authorList>
            <person name="Goto T."/>
            <person name="Yamashita A."/>
            <person name="Hirakawa H."/>
            <person name="Matsutani M."/>
            <person name="Todo K."/>
            <person name="Ohshima K."/>
            <person name="Toh H."/>
            <person name="Miyamoto K."/>
            <person name="Kuhara S."/>
            <person name="Hattori M."/>
            <person name="Shimizu T."/>
            <person name="Akimoto S."/>
        </authorList>
    </citation>
    <scope>NUCLEOTIDE SEQUENCE [LARGE SCALE GENOMIC DNA]</scope>
    <source>
        <strain>ATCC 29328 / DSM 20472 / WAL 2508</strain>
    </source>
</reference>
<accession>B0S1F0</accession>
<proteinExistence type="inferred from homology"/>
<dbReference type="EMBL" id="AP008971">
    <property type="protein sequence ID" value="BAG08190.1"/>
    <property type="molecule type" value="Genomic_DNA"/>
</dbReference>
<dbReference type="RefSeq" id="WP_002836436.1">
    <property type="nucleotide sequence ID" value="NC_010376.1"/>
</dbReference>
<dbReference type="SMR" id="B0S1F0"/>
<dbReference type="STRING" id="334413.FMG_0772"/>
<dbReference type="GeneID" id="60840174"/>
<dbReference type="KEGG" id="fma:FMG_0772"/>
<dbReference type="eggNOG" id="COG4864">
    <property type="taxonomic scope" value="Bacteria"/>
</dbReference>
<dbReference type="HOGENOM" id="CLU_836378_0_0_9"/>
<dbReference type="Proteomes" id="UP000001319">
    <property type="component" value="Chromosome"/>
</dbReference>
<dbReference type="GO" id="GO:0045121">
    <property type="term" value="C:membrane raft"/>
    <property type="evidence" value="ECO:0007669"/>
    <property type="project" value="UniProtKB-SubCell"/>
</dbReference>
<dbReference type="GO" id="GO:0005886">
    <property type="term" value="C:plasma membrane"/>
    <property type="evidence" value="ECO:0007669"/>
    <property type="project" value="UniProtKB-SubCell"/>
</dbReference>
<dbReference type="HAMAP" id="MF_01562">
    <property type="entry name" value="FloA"/>
    <property type="match status" value="1"/>
</dbReference>
<dbReference type="InterPro" id="IPR022853">
    <property type="entry name" value="FloA"/>
</dbReference>
<dbReference type="NCBIfam" id="NF010186">
    <property type="entry name" value="PRK13665.1"/>
    <property type="match status" value="1"/>
</dbReference>
<dbReference type="Pfam" id="PF12127">
    <property type="entry name" value="FloA"/>
    <property type="match status" value="1"/>
</dbReference>
<protein>
    <recommendedName>
        <fullName evidence="1">Flotillin-like protein FloA</fullName>
    </recommendedName>
</protein>